<gene>
    <name evidence="2" type="primary">trmB</name>
    <name type="ordered locus">LCA_0632</name>
</gene>
<evidence type="ECO:0000250" key="1"/>
<evidence type="ECO:0000255" key="2">
    <source>
        <dbReference type="HAMAP-Rule" id="MF_01057"/>
    </source>
</evidence>
<organism>
    <name type="scientific">Latilactobacillus sakei subsp. sakei (strain 23K)</name>
    <name type="common">Lactobacillus sakei subsp. sakei</name>
    <dbReference type="NCBI Taxonomy" id="314315"/>
    <lineage>
        <taxon>Bacteria</taxon>
        <taxon>Bacillati</taxon>
        <taxon>Bacillota</taxon>
        <taxon>Bacilli</taxon>
        <taxon>Lactobacillales</taxon>
        <taxon>Lactobacillaceae</taxon>
        <taxon>Latilactobacillus</taxon>
    </lineage>
</organism>
<protein>
    <recommendedName>
        <fullName evidence="2">tRNA (guanine-N(7)-)-methyltransferase</fullName>
        <ecNumber evidence="2">2.1.1.33</ecNumber>
    </recommendedName>
    <alternativeName>
        <fullName evidence="2">tRNA (guanine(46)-N(7))-methyltransferase</fullName>
    </alternativeName>
    <alternativeName>
        <fullName evidence="2">tRNA(m7G46)-methyltransferase</fullName>
    </alternativeName>
</protein>
<comment type="function">
    <text evidence="2">Catalyzes the formation of N(7)-methylguanine at position 46 (m7G46) in tRNA.</text>
</comment>
<comment type="catalytic activity">
    <reaction evidence="2">
        <text>guanosine(46) in tRNA + S-adenosyl-L-methionine = N(7)-methylguanosine(46) in tRNA + S-adenosyl-L-homocysteine</text>
        <dbReference type="Rhea" id="RHEA:42708"/>
        <dbReference type="Rhea" id="RHEA-COMP:10188"/>
        <dbReference type="Rhea" id="RHEA-COMP:10189"/>
        <dbReference type="ChEBI" id="CHEBI:57856"/>
        <dbReference type="ChEBI" id="CHEBI:59789"/>
        <dbReference type="ChEBI" id="CHEBI:74269"/>
        <dbReference type="ChEBI" id="CHEBI:74480"/>
        <dbReference type="EC" id="2.1.1.33"/>
    </reaction>
</comment>
<comment type="pathway">
    <text evidence="2">tRNA modification; N(7)-methylguanine-tRNA biosynthesis.</text>
</comment>
<comment type="similarity">
    <text evidence="2">Belongs to the class I-like SAM-binding methyltransferase superfamily. TrmB family.</text>
</comment>
<reference key="1">
    <citation type="journal article" date="2005" name="Nat. Biotechnol.">
        <title>The complete genome sequence of the meat-borne lactic acid bacterium Lactobacillus sakei 23K.</title>
        <authorList>
            <person name="Chaillou S."/>
            <person name="Champomier-Verges M.-C."/>
            <person name="Cornet M."/>
            <person name="Crutz-Le Coq A.-M."/>
            <person name="Dudez A.-M."/>
            <person name="Martin V."/>
            <person name="Beaufils S."/>
            <person name="Darbon-Rongere E."/>
            <person name="Bossy R."/>
            <person name="Loux V."/>
            <person name="Zagorec M."/>
        </authorList>
    </citation>
    <scope>NUCLEOTIDE SEQUENCE [LARGE SCALE GENOMIC DNA]</scope>
    <source>
        <strain>23K</strain>
    </source>
</reference>
<sequence>MRLRNKPWAADLIAENPDMILVSPENIASNWQSRFAKEQPIYIEVGSGKGQFITQMAQKYPDRNFIAVEIQESAIAVILQKQVELKLPNLQLLLGNGAALTTFFAENEVAGVYLNFSDPWPKTRHEKRRLTYKSFLAEYQQIMQPTGYLRFKTDNQGLFEYSLASLNAYGMVFDDISLDLHNSDLAEDNIQTEYEEKFSKRGQVIYRLEAHYK</sequence>
<proteinExistence type="inferred from homology"/>
<dbReference type="EC" id="2.1.1.33" evidence="2"/>
<dbReference type="EMBL" id="CR936503">
    <property type="protein sequence ID" value="CAI54936.1"/>
    <property type="molecule type" value="Genomic_DNA"/>
</dbReference>
<dbReference type="RefSeq" id="WP_011374341.1">
    <property type="nucleotide sequence ID" value="NC_007576.1"/>
</dbReference>
<dbReference type="SMR" id="Q38XZ3"/>
<dbReference type="STRING" id="314315.LCA_0632"/>
<dbReference type="KEGG" id="lsa:LCA_0632"/>
<dbReference type="eggNOG" id="COG0220">
    <property type="taxonomic scope" value="Bacteria"/>
</dbReference>
<dbReference type="HOGENOM" id="CLU_050910_2_1_9"/>
<dbReference type="OrthoDB" id="9802090at2"/>
<dbReference type="UniPathway" id="UPA00989"/>
<dbReference type="Proteomes" id="UP000002707">
    <property type="component" value="Chromosome"/>
</dbReference>
<dbReference type="GO" id="GO:0043527">
    <property type="term" value="C:tRNA methyltransferase complex"/>
    <property type="evidence" value="ECO:0007669"/>
    <property type="project" value="TreeGrafter"/>
</dbReference>
<dbReference type="GO" id="GO:0008176">
    <property type="term" value="F:tRNA (guanine(46)-N7)-methyltransferase activity"/>
    <property type="evidence" value="ECO:0007669"/>
    <property type="project" value="UniProtKB-UniRule"/>
</dbReference>
<dbReference type="CDD" id="cd02440">
    <property type="entry name" value="AdoMet_MTases"/>
    <property type="match status" value="1"/>
</dbReference>
<dbReference type="FunFam" id="3.40.50.150:FF:000035">
    <property type="entry name" value="tRNA (guanine-N(7)-)-methyltransferase"/>
    <property type="match status" value="1"/>
</dbReference>
<dbReference type="Gene3D" id="3.40.50.150">
    <property type="entry name" value="Vaccinia Virus protein VP39"/>
    <property type="match status" value="1"/>
</dbReference>
<dbReference type="HAMAP" id="MF_01057">
    <property type="entry name" value="tRNA_methyltr_TrmB"/>
    <property type="match status" value="1"/>
</dbReference>
<dbReference type="InterPro" id="IPR029063">
    <property type="entry name" value="SAM-dependent_MTases_sf"/>
</dbReference>
<dbReference type="InterPro" id="IPR003358">
    <property type="entry name" value="tRNA_(Gua-N-7)_MeTrfase_Trmb"/>
</dbReference>
<dbReference type="InterPro" id="IPR055361">
    <property type="entry name" value="tRNA_methyltr_TrmB_bact"/>
</dbReference>
<dbReference type="NCBIfam" id="NF001080">
    <property type="entry name" value="PRK00121.2-2"/>
    <property type="match status" value="1"/>
</dbReference>
<dbReference type="NCBIfam" id="TIGR00091">
    <property type="entry name" value="tRNA (guanosine(46)-N7)-methyltransferase TrmB"/>
    <property type="match status" value="1"/>
</dbReference>
<dbReference type="PANTHER" id="PTHR23417">
    <property type="entry name" value="3-DEOXY-D-MANNO-OCTULOSONIC-ACID TRANSFERASE/TRNA GUANINE-N 7 - -METHYLTRANSFERASE"/>
    <property type="match status" value="1"/>
</dbReference>
<dbReference type="PANTHER" id="PTHR23417:SF14">
    <property type="entry name" value="PENTACOTRIPEPTIDE-REPEAT REGION OF PRORP DOMAIN-CONTAINING PROTEIN"/>
    <property type="match status" value="1"/>
</dbReference>
<dbReference type="Pfam" id="PF02390">
    <property type="entry name" value="Methyltransf_4"/>
    <property type="match status" value="1"/>
</dbReference>
<dbReference type="SUPFAM" id="SSF53335">
    <property type="entry name" value="S-adenosyl-L-methionine-dependent methyltransferases"/>
    <property type="match status" value="1"/>
</dbReference>
<dbReference type="PROSITE" id="PS51625">
    <property type="entry name" value="SAM_MT_TRMB"/>
    <property type="match status" value="1"/>
</dbReference>
<feature type="chain" id="PRO_0000229169" description="tRNA (guanine-N(7)-)-methyltransferase">
    <location>
        <begin position="1"/>
        <end position="213"/>
    </location>
</feature>
<feature type="region of interest" description="Interaction with RNA" evidence="2">
    <location>
        <begin position="124"/>
        <end position="129"/>
    </location>
</feature>
<feature type="active site" evidence="1">
    <location>
        <position position="118"/>
    </location>
</feature>
<feature type="binding site" evidence="2">
    <location>
        <position position="44"/>
    </location>
    <ligand>
        <name>S-adenosyl-L-methionine</name>
        <dbReference type="ChEBI" id="CHEBI:59789"/>
    </ligand>
</feature>
<feature type="binding site" evidence="2">
    <location>
        <position position="69"/>
    </location>
    <ligand>
        <name>S-adenosyl-L-methionine</name>
        <dbReference type="ChEBI" id="CHEBI:59789"/>
    </ligand>
</feature>
<feature type="binding site" evidence="2">
    <location>
        <position position="96"/>
    </location>
    <ligand>
        <name>S-adenosyl-L-methionine</name>
        <dbReference type="ChEBI" id="CHEBI:59789"/>
    </ligand>
</feature>
<feature type="binding site" evidence="2">
    <location>
        <position position="118"/>
    </location>
    <ligand>
        <name>S-adenosyl-L-methionine</name>
        <dbReference type="ChEBI" id="CHEBI:59789"/>
    </ligand>
</feature>
<feature type="binding site" evidence="2">
    <location>
        <position position="122"/>
    </location>
    <ligand>
        <name>substrate</name>
    </ligand>
</feature>
<feature type="binding site" evidence="2">
    <location>
        <position position="154"/>
    </location>
    <ligand>
        <name>substrate</name>
    </ligand>
</feature>
<feature type="binding site" evidence="2">
    <location>
        <begin position="192"/>
        <end position="195"/>
    </location>
    <ligand>
        <name>substrate</name>
    </ligand>
</feature>
<name>TRMB_LATSS</name>
<accession>Q38XZ3</accession>
<keyword id="KW-0489">Methyltransferase</keyword>
<keyword id="KW-1185">Reference proteome</keyword>
<keyword id="KW-0949">S-adenosyl-L-methionine</keyword>
<keyword id="KW-0808">Transferase</keyword>
<keyword id="KW-0819">tRNA processing</keyword>